<name>MK10_HUMAN</name>
<reference key="1">
    <citation type="journal article" date="1995" name="Neuron">
        <title>p493F12 kinase: a novel MAP kinase expressed in a subset of neurons in the human nervous system.</title>
        <authorList>
            <person name="Mohit A.A."/>
            <person name="Martin J.H."/>
            <person name="Miller C.A."/>
        </authorList>
    </citation>
    <scope>NUCLEOTIDE SEQUENCE [MRNA] (ISOFORM ALPHA-1)</scope>
    <source>
        <tissue>Hippocampus</tissue>
    </source>
</reference>
<reference key="2">
    <citation type="journal article" date="1996" name="EMBO J.">
        <title>Selective interaction of JNK protein kinase isoforms with transcription factors.</title>
        <authorList>
            <person name="Gupta S."/>
            <person name="Barrett T."/>
            <person name="Whitmarsh A.J."/>
            <person name="Cavanagh J."/>
            <person name="Sluss H.K."/>
            <person name="Derijard B."/>
            <person name="Davis R.J."/>
        </authorList>
    </citation>
    <scope>NUCLEOTIDE SEQUENCE [MRNA] (ISOFORMS ALPHA-1 AND ALPHA-2)</scope>
    <source>
        <tissue>Brain</tissue>
    </source>
</reference>
<reference key="3">
    <citation type="journal article" date="2004" name="Nat. Genet.">
        <title>Complete sequencing and characterization of 21,243 full-length human cDNAs.</title>
        <authorList>
            <person name="Ota T."/>
            <person name="Suzuki Y."/>
            <person name="Nishikawa T."/>
            <person name="Otsuki T."/>
            <person name="Sugiyama T."/>
            <person name="Irie R."/>
            <person name="Wakamatsu A."/>
            <person name="Hayashi K."/>
            <person name="Sato H."/>
            <person name="Nagai K."/>
            <person name="Kimura K."/>
            <person name="Makita H."/>
            <person name="Sekine M."/>
            <person name="Obayashi M."/>
            <person name="Nishi T."/>
            <person name="Shibahara T."/>
            <person name="Tanaka T."/>
            <person name="Ishii S."/>
            <person name="Yamamoto J."/>
            <person name="Saito K."/>
            <person name="Kawai Y."/>
            <person name="Isono Y."/>
            <person name="Nakamura Y."/>
            <person name="Nagahari K."/>
            <person name="Murakami K."/>
            <person name="Yasuda T."/>
            <person name="Iwayanagi T."/>
            <person name="Wagatsuma M."/>
            <person name="Shiratori A."/>
            <person name="Sudo H."/>
            <person name="Hosoiri T."/>
            <person name="Kaku Y."/>
            <person name="Kodaira H."/>
            <person name="Kondo H."/>
            <person name="Sugawara M."/>
            <person name="Takahashi M."/>
            <person name="Kanda K."/>
            <person name="Yokoi T."/>
            <person name="Furuya T."/>
            <person name="Kikkawa E."/>
            <person name="Omura Y."/>
            <person name="Abe K."/>
            <person name="Kamihara K."/>
            <person name="Katsuta N."/>
            <person name="Sato K."/>
            <person name="Tanikawa M."/>
            <person name="Yamazaki M."/>
            <person name="Ninomiya K."/>
            <person name="Ishibashi T."/>
            <person name="Yamashita H."/>
            <person name="Murakawa K."/>
            <person name="Fujimori K."/>
            <person name="Tanai H."/>
            <person name="Kimata M."/>
            <person name="Watanabe M."/>
            <person name="Hiraoka S."/>
            <person name="Chiba Y."/>
            <person name="Ishida S."/>
            <person name="Ono Y."/>
            <person name="Takiguchi S."/>
            <person name="Watanabe S."/>
            <person name="Yosida M."/>
            <person name="Hotuta T."/>
            <person name="Kusano J."/>
            <person name="Kanehori K."/>
            <person name="Takahashi-Fujii A."/>
            <person name="Hara H."/>
            <person name="Tanase T.-O."/>
            <person name="Nomura Y."/>
            <person name="Togiya S."/>
            <person name="Komai F."/>
            <person name="Hara R."/>
            <person name="Takeuchi K."/>
            <person name="Arita M."/>
            <person name="Imose N."/>
            <person name="Musashino K."/>
            <person name="Yuuki H."/>
            <person name="Oshima A."/>
            <person name="Sasaki N."/>
            <person name="Aotsuka S."/>
            <person name="Yoshikawa Y."/>
            <person name="Matsunawa H."/>
            <person name="Ichihara T."/>
            <person name="Shiohata N."/>
            <person name="Sano S."/>
            <person name="Moriya S."/>
            <person name="Momiyama H."/>
            <person name="Satoh N."/>
            <person name="Takami S."/>
            <person name="Terashima Y."/>
            <person name="Suzuki O."/>
            <person name="Nakagawa S."/>
            <person name="Senoh A."/>
            <person name="Mizoguchi H."/>
            <person name="Goto Y."/>
            <person name="Shimizu F."/>
            <person name="Wakebe H."/>
            <person name="Hishigaki H."/>
            <person name="Watanabe T."/>
            <person name="Sugiyama A."/>
            <person name="Takemoto M."/>
            <person name="Kawakami B."/>
            <person name="Yamazaki M."/>
            <person name="Watanabe K."/>
            <person name="Kumagai A."/>
            <person name="Itakura S."/>
            <person name="Fukuzumi Y."/>
            <person name="Fujimori Y."/>
            <person name="Komiyama M."/>
            <person name="Tashiro H."/>
            <person name="Tanigami A."/>
            <person name="Fujiwara T."/>
            <person name="Ono T."/>
            <person name="Yamada K."/>
            <person name="Fujii Y."/>
            <person name="Ozaki K."/>
            <person name="Hirao M."/>
            <person name="Ohmori Y."/>
            <person name="Kawabata A."/>
            <person name="Hikiji T."/>
            <person name="Kobatake N."/>
            <person name="Inagaki H."/>
            <person name="Ikema Y."/>
            <person name="Okamoto S."/>
            <person name="Okitani R."/>
            <person name="Kawakami T."/>
            <person name="Noguchi S."/>
            <person name="Itoh T."/>
            <person name="Shigeta K."/>
            <person name="Senba T."/>
            <person name="Matsumura K."/>
            <person name="Nakajima Y."/>
            <person name="Mizuno T."/>
            <person name="Morinaga M."/>
            <person name="Sasaki M."/>
            <person name="Togashi T."/>
            <person name="Oyama M."/>
            <person name="Hata H."/>
            <person name="Watanabe M."/>
            <person name="Komatsu T."/>
            <person name="Mizushima-Sugano J."/>
            <person name="Satoh T."/>
            <person name="Shirai Y."/>
            <person name="Takahashi Y."/>
            <person name="Nakagawa K."/>
            <person name="Okumura K."/>
            <person name="Nagase T."/>
            <person name="Nomura N."/>
            <person name="Kikuchi H."/>
            <person name="Masuho Y."/>
            <person name="Yamashita R."/>
            <person name="Nakai K."/>
            <person name="Yada T."/>
            <person name="Nakamura Y."/>
            <person name="Ohara O."/>
            <person name="Isogai T."/>
            <person name="Sugano S."/>
        </authorList>
    </citation>
    <scope>NUCLEOTIDE SEQUENCE [LARGE SCALE MRNA] (ISOFORM 3)</scope>
    <scope>NUCLEOTIDE SEQUENCE [LARGE SCALE MRNA] OF 143-464 (ISOFORM ALPHA-1)</scope>
    <source>
        <tissue>Caudate nucleus</tissue>
    </source>
</reference>
<reference key="4">
    <citation type="journal article" date="2005" name="Nature">
        <title>Generation and annotation of the DNA sequences of human chromosomes 2 and 4.</title>
        <authorList>
            <person name="Hillier L.W."/>
            <person name="Graves T.A."/>
            <person name="Fulton R.S."/>
            <person name="Fulton L.A."/>
            <person name="Pepin K.H."/>
            <person name="Minx P."/>
            <person name="Wagner-McPherson C."/>
            <person name="Layman D."/>
            <person name="Wylie K."/>
            <person name="Sekhon M."/>
            <person name="Becker M.C."/>
            <person name="Fewell G.A."/>
            <person name="Delehaunty K.D."/>
            <person name="Miner T.L."/>
            <person name="Nash W.E."/>
            <person name="Kremitzki C."/>
            <person name="Oddy L."/>
            <person name="Du H."/>
            <person name="Sun H."/>
            <person name="Bradshaw-Cordum H."/>
            <person name="Ali J."/>
            <person name="Carter J."/>
            <person name="Cordes M."/>
            <person name="Harris A."/>
            <person name="Isak A."/>
            <person name="van Brunt A."/>
            <person name="Nguyen C."/>
            <person name="Du F."/>
            <person name="Courtney L."/>
            <person name="Kalicki J."/>
            <person name="Ozersky P."/>
            <person name="Abbott S."/>
            <person name="Armstrong J."/>
            <person name="Belter E.A."/>
            <person name="Caruso L."/>
            <person name="Cedroni M."/>
            <person name="Cotton M."/>
            <person name="Davidson T."/>
            <person name="Desai A."/>
            <person name="Elliott G."/>
            <person name="Erb T."/>
            <person name="Fronick C."/>
            <person name="Gaige T."/>
            <person name="Haakenson W."/>
            <person name="Haglund K."/>
            <person name="Holmes A."/>
            <person name="Harkins R."/>
            <person name="Kim K."/>
            <person name="Kruchowski S.S."/>
            <person name="Strong C.M."/>
            <person name="Grewal N."/>
            <person name="Goyea E."/>
            <person name="Hou S."/>
            <person name="Levy A."/>
            <person name="Martinka S."/>
            <person name="Mead K."/>
            <person name="McLellan M.D."/>
            <person name="Meyer R."/>
            <person name="Randall-Maher J."/>
            <person name="Tomlinson C."/>
            <person name="Dauphin-Kohlberg S."/>
            <person name="Kozlowicz-Reilly A."/>
            <person name="Shah N."/>
            <person name="Swearengen-Shahid S."/>
            <person name="Snider J."/>
            <person name="Strong J.T."/>
            <person name="Thompson J."/>
            <person name="Yoakum M."/>
            <person name="Leonard S."/>
            <person name="Pearman C."/>
            <person name="Trani L."/>
            <person name="Radionenko M."/>
            <person name="Waligorski J.E."/>
            <person name="Wang C."/>
            <person name="Rock S.M."/>
            <person name="Tin-Wollam A.-M."/>
            <person name="Maupin R."/>
            <person name="Latreille P."/>
            <person name="Wendl M.C."/>
            <person name="Yang S.-P."/>
            <person name="Pohl C."/>
            <person name="Wallis J.W."/>
            <person name="Spieth J."/>
            <person name="Bieri T.A."/>
            <person name="Berkowicz N."/>
            <person name="Nelson J.O."/>
            <person name="Osborne J."/>
            <person name="Ding L."/>
            <person name="Meyer R."/>
            <person name="Sabo A."/>
            <person name="Shotland Y."/>
            <person name="Sinha P."/>
            <person name="Wohldmann P.E."/>
            <person name="Cook L.L."/>
            <person name="Hickenbotham M.T."/>
            <person name="Eldred J."/>
            <person name="Williams D."/>
            <person name="Jones T.A."/>
            <person name="She X."/>
            <person name="Ciccarelli F.D."/>
            <person name="Izaurralde E."/>
            <person name="Taylor J."/>
            <person name="Schmutz J."/>
            <person name="Myers R.M."/>
            <person name="Cox D.R."/>
            <person name="Huang X."/>
            <person name="McPherson J.D."/>
            <person name="Mardis E.R."/>
            <person name="Clifton S.W."/>
            <person name="Warren W.C."/>
            <person name="Chinwalla A.T."/>
            <person name="Eddy S.R."/>
            <person name="Marra M.A."/>
            <person name="Ovcharenko I."/>
            <person name="Furey T.S."/>
            <person name="Miller W."/>
            <person name="Eichler E.E."/>
            <person name="Bork P."/>
            <person name="Suyama M."/>
            <person name="Torrents D."/>
            <person name="Waterston R.H."/>
            <person name="Wilson R.K."/>
        </authorList>
    </citation>
    <scope>NUCLEOTIDE SEQUENCE [LARGE SCALE GENOMIC DNA]</scope>
</reference>
<reference key="5">
    <citation type="submission" date="2005-07" db="EMBL/GenBank/DDBJ databases">
        <authorList>
            <person name="Mural R.J."/>
            <person name="Istrail S."/>
            <person name="Sutton G.G."/>
            <person name="Florea L."/>
            <person name="Halpern A.L."/>
            <person name="Mobarry C.M."/>
            <person name="Lippert R."/>
            <person name="Walenz B."/>
            <person name="Shatkay H."/>
            <person name="Dew I."/>
            <person name="Miller J.R."/>
            <person name="Flanigan M.J."/>
            <person name="Edwards N.J."/>
            <person name="Bolanos R."/>
            <person name="Fasulo D."/>
            <person name="Halldorsson B.V."/>
            <person name="Hannenhalli S."/>
            <person name="Turner R."/>
            <person name="Yooseph S."/>
            <person name="Lu F."/>
            <person name="Nusskern D.R."/>
            <person name="Shue B.C."/>
            <person name="Zheng X.H."/>
            <person name="Zhong F."/>
            <person name="Delcher A.L."/>
            <person name="Huson D.H."/>
            <person name="Kravitz S.A."/>
            <person name="Mouchard L."/>
            <person name="Reinert K."/>
            <person name="Remington K.A."/>
            <person name="Clark A.G."/>
            <person name="Waterman M.S."/>
            <person name="Eichler E.E."/>
            <person name="Adams M.D."/>
            <person name="Hunkapiller M.W."/>
            <person name="Myers E.W."/>
            <person name="Venter J.C."/>
        </authorList>
    </citation>
    <scope>NUCLEOTIDE SEQUENCE [LARGE SCALE GENOMIC DNA]</scope>
</reference>
<reference key="6">
    <citation type="journal article" date="2004" name="Genome Res.">
        <title>The status, quality, and expansion of the NIH full-length cDNA project: the Mammalian Gene Collection (MGC).</title>
        <authorList>
            <consortium name="The MGC Project Team"/>
        </authorList>
    </citation>
    <scope>NUCLEOTIDE SEQUENCE [LARGE SCALE MRNA] (ISOFORM ALPHA-2)</scope>
    <source>
        <tissue>Brain</tissue>
    </source>
</reference>
<reference key="7">
    <citation type="journal article" date="2000" name="Biochemistry">
        <title>Activation of JNK3 alpha 1 requires both MKK4 and MKK7: kinetic characterization of in vitro phosphorylated JNK3 alpha 1.</title>
        <authorList>
            <person name="Lisnock J."/>
            <person name="Griffin P."/>
            <person name="Calaycay J."/>
            <person name="Frantz B."/>
            <person name="Parsons J."/>
            <person name="O'Keefe S.J."/>
            <person name="LoGrasso P."/>
        </authorList>
    </citation>
    <scope>PARTIAL PROTEIN SEQUENCE</scope>
    <scope>REGULATION BY MAP2K4 AND MAP2K7</scope>
    <scope>PHOSPHORYLATION AT THR-221 AND TYR-223</scope>
    <scope>COFACTOR</scope>
    <scope>MASS SPECTROMETRY</scope>
</reference>
<reference key="8">
    <citation type="journal article" date="2000" name="Biochem. J.">
        <title>Synergistic activation of stress-activated protein kinase 1/c-Jun N-terminal kinase (SAPK1/JNK) isoforms by mitogen-activated protein kinase kinase 4 (MKK4) and MKK7.</title>
        <authorList>
            <person name="Fleming Y."/>
            <person name="Armstrong C.G."/>
            <person name="Morrice N."/>
            <person name="Paterson A."/>
            <person name="Goedert M."/>
            <person name="Cohen P."/>
        </authorList>
    </citation>
    <scope>ACTIVITY REGULATION</scope>
</reference>
<reference key="9">
    <citation type="journal article" date="2001" name="FEBS Lett.">
        <title>c-Jun N-terminal kinase-3 (JNK3)/stress-activated protein kinase-beta (SAPKbeta) binds and phosphorylates the neuronal microtubule regulator SCG10.</title>
        <authorList>
            <person name="Neidhart S."/>
            <person name="Antonsson B."/>
            <person name="Gillieron C."/>
            <person name="Vilbois F."/>
            <person name="Grenningloh G."/>
            <person name="Arkinstall S."/>
        </authorList>
    </citation>
    <scope>FUNCTION IN PHOSPHORYLATION OF STMN2</scope>
</reference>
<reference key="10">
    <citation type="journal article" date="2005" name="Biochem. J.">
        <title>Characterization of a novel human sperm-associated antigen 9 (SPAG9) having structural homology with c-Jun N-terminal kinase-interacting protein.</title>
        <authorList>
            <person name="Jagadish N."/>
            <person name="Rana R."/>
            <person name="Selvi R."/>
            <person name="Mishra D."/>
            <person name="Garg M."/>
            <person name="Yadav S."/>
            <person name="Herr J.C."/>
            <person name="Okumura K."/>
            <person name="Hasegawa A."/>
            <person name="Koyama K."/>
            <person name="Suri A."/>
        </authorList>
    </citation>
    <scope>INTERACTION WITH SPAG9</scope>
</reference>
<reference key="11">
    <citation type="journal article" date="2006" name="Hum. Genet.">
        <title>Truncation of the CNS-expressed JNK3 in a patient with a severe developmental epileptic encephalopathy.</title>
        <authorList>
            <person name="Shoichet S.A."/>
            <person name="Duprez L."/>
            <person name="Hagens O."/>
            <person name="Waetzig V."/>
            <person name="Menzel C."/>
            <person name="Herdegen T."/>
            <person name="Schweiger S."/>
            <person name="Dan B."/>
            <person name="Vamos E."/>
            <person name="Ropers H.-H."/>
            <person name="Kalscheuer V.M."/>
        </authorList>
    </citation>
    <scope>CHROMOSOMAL REARRANGEMENT</scope>
    <scope>DISEASE</scope>
</reference>
<reference key="12">
    <citation type="journal article" date="2006" name="J. Biol. Chem.">
        <title>Visual and both non-visual arrestins in their 'inactive' conformation bind JNK3 and Mdm2 and relocalize them from the nucleus to the cytoplasm.</title>
        <authorList>
            <person name="Song X."/>
            <person name="Raman D."/>
            <person name="Gurevich E.V."/>
            <person name="Vishnivetskiy S.A."/>
            <person name="Gurevich V.V."/>
        </authorList>
    </citation>
    <scope>SUBCELLULAR LOCATION</scope>
</reference>
<reference key="13">
    <citation type="journal article" date="2006" name="Mol. Cell. Biol.">
        <title>Neuroprotection by histone deacetylase-related protein.</title>
        <authorList>
            <person name="Morrison B.E."/>
            <person name="Majdzadeh N."/>
            <person name="Zhang X."/>
            <person name="Lyles A."/>
            <person name="Bassel-Duby R."/>
            <person name="Olson E.N."/>
            <person name="D'Mello S.R."/>
        </authorList>
    </citation>
    <scope>INTERACTION WITH HDAC9</scope>
    <scope>ACTIVITY REGULATION</scope>
</reference>
<reference key="14">
    <citation type="journal article" date="2008" name="Biochem. J.">
        <title>Mutations of beta-arrestin 2 that limit self-association also interfere with interactions with the beta2-adrenoceptor and the ERK1/2 MAPKs: implications for beta2-adrenoceptor signalling via the ERK1/2 MAPKs.</title>
        <authorList>
            <person name="Xu T.-R."/>
            <person name="Baillie G.S."/>
            <person name="Bhari N."/>
            <person name="Houslay T.M."/>
            <person name="Pitt A.M."/>
            <person name="Adams D.R."/>
            <person name="Kolch W."/>
            <person name="Houslay M.D."/>
            <person name="Milligan G."/>
        </authorList>
    </citation>
    <scope>INTERACTION WITH ARRB2</scope>
</reference>
<reference key="15">
    <citation type="journal article" date="2012" name="Cell Death Differ.">
        <title>Isoform-specific palmitoylation of JNK regulates axonal development.</title>
        <authorList>
            <person name="Yang G."/>
            <person name="Liu Y."/>
            <person name="Yang K."/>
            <person name="Liu R."/>
            <person name="Zhu S."/>
            <person name="Coquinco A."/>
            <person name="Wen W."/>
            <person name="Kojic L."/>
            <person name="Jia W."/>
            <person name="Cynader M."/>
        </authorList>
    </citation>
    <scope>PALMITOYLATION AT CYS-462 AND CYS-463</scope>
    <scope>MUTAGENESIS OF CYS-462 AND CYS-463</scope>
</reference>
<reference key="16">
    <citation type="journal article" date="2012" name="EMBO Rep.">
        <title>JNK regulates the photic response of the mammalian circadian clock.</title>
        <authorList>
            <person name="Yoshitane H."/>
            <person name="Honma S."/>
            <person name="Imamura K."/>
            <person name="Nakajima H."/>
            <person name="Nishide S.Y."/>
            <person name="Ono D."/>
            <person name="Kiyota H."/>
            <person name="Shinozaki N."/>
            <person name="Matsuki H."/>
            <person name="Wada N."/>
            <person name="Doi H."/>
            <person name="Hamada T."/>
            <person name="Honma K."/>
            <person name="Fukada Y."/>
        </authorList>
    </citation>
    <scope>FUNCTION</scope>
</reference>
<reference key="17">
    <citation type="journal article" date="2012" name="Nature">
        <title>The same pocket in menin binds both MLL and JUND but has opposite effects on transcription.</title>
        <authorList>
            <person name="Huang J."/>
            <person name="Gurung B."/>
            <person name="Wan B."/>
            <person name="Matkar S."/>
            <person name="Veniaminova N.A."/>
            <person name="Wan K."/>
            <person name="Merchant J.L."/>
            <person name="Hua X."/>
            <person name="Lei M."/>
        </authorList>
    </citation>
    <scope>FUNCTION</scope>
    <scope>INTERACTION WITH JUND</scope>
</reference>
<reference key="18">
    <citation type="journal article" date="1998" name="Structure">
        <title>Crystal structure of JNK3: a kinase implicated in neuronal apoptosis.</title>
        <authorList>
            <person name="Xie X."/>
            <person name="Gu Y."/>
            <person name="Fox T."/>
            <person name="Coll J.T."/>
            <person name="Fleming M.A."/>
            <person name="Markland W."/>
            <person name="Caron P.R."/>
            <person name="Wilson K.P."/>
            <person name="Su M.S.-S."/>
        </authorList>
    </citation>
    <scope>X-RAY CRYSTALLOGRAPHY (2.3 ANGSTROMS) OF 40-402</scope>
</reference>
<sequence length="464" mass="52585">MSLHFLYYCSEPTLDVKIAFCQGFDKQVDVSYIAKHYNMSKSKVDNQFYSVEVGDSTFTVLKRYQNLKPIGSGAQGIVCAAYDAVLDRNVAIKKLSRPFQNQTHAKRAYRELVLMKCVNHKNIISLLNVFTPQKTLEEFQDVYLVMELMDANLCQVIQMELDHERMSYLLYQMLCGIKHLHSAGIIHRDLKPSNIVVKSDCTLKILDFGLARTAGTSFMMTPYVVTRYYRAPEVILGMGYKENVDIWSVGCIMGEMVRHKILFPGRDYIDQWNKVIEQLGTPCPEFMKKLQPTVRNYVENRPKYAGLTFPKLFPDSLFPADSEHNKLKASQARDLLSKMLVIDPAKRISVDDALQHPYINVWYDPAEVEAPPPQIYDKQLDEREHTIEEWKELIYKEVMNSEEKTKNGVVKGQPSPSGAAVNSSESLPPSSSVNDISSMSTDQTLASDTDSSLEASAGPLGCCR</sequence>
<evidence type="ECO:0000250" key="1"/>
<evidence type="ECO:0000250" key="2">
    <source>
        <dbReference type="UniProtKB" id="P49187"/>
    </source>
</evidence>
<evidence type="ECO:0000250" key="3">
    <source>
        <dbReference type="UniProtKB" id="Q61831"/>
    </source>
</evidence>
<evidence type="ECO:0000255" key="4">
    <source>
        <dbReference type="PROSITE-ProRule" id="PRU00159"/>
    </source>
</evidence>
<evidence type="ECO:0000256" key="5">
    <source>
        <dbReference type="SAM" id="MobiDB-lite"/>
    </source>
</evidence>
<evidence type="ECO:0000269" key="6">
    <source>
    </source>
</evidence>
<evidence type="ECO:0000269" key="7">
    <source>
    </source>
</evidence>
<evidence type="ECO:0000269" key="8">
    <source>
    </source>
</evidence>
<evidence type="ECO:0000269" key="9">
    <source>
    </source>
</evidence>
<evidence type="ECO:0000269" key="10">
    <source>
    </source>
</evidence>
<evidence type="ECO:0000269" key="11">
    <source>
    </source>
</evidence>
<evidence type="ECO:0000269" key="12">
    <source>
    </source>
</evidence>
<evidence type="ECO:0000269" key="13">
    <source>
    </source>
</evidence>
<evidence type="ECO:0000269" key="14">
    <source>
    </source>
</evidence>
<evidence type="ECO:0000269" key="15">
    <source>
    </source>
</evidence>
<evidence type="ECO:0000269" key="16">
    <source>
    </source>
</evidence>
<evidence type="ECO:0000303" key="17">
    <source>
    </source>
</evidence>
<evidence type="ECO:0000303" key="18">
    <source>
    </source>
</evidence>
<evidence type="ECO:0000303" key="19">
    <source>
    </source>
</evidence>
<evidence type="ECO:0000305" key="20"/>
<evidence type="ECO:0000305" key="21">
    <source>
    </source>
</evidence>
<evidence type="ECO:0007829" key="22">
    <source>
        <dbReference type="PDB" id="3KVX"/>
    </source>
</evidence>
<evidence type="ECO:0007829" key="23">
    <source>
        <dbReference type="PDB" id="3OY1"/>
    </source>
</evidence>
<evidence type="ECO:0007829" key="24">
    <source>
        <dbReference type="PDB" id="3PTG"/>
    </source>
</evidence>
<evidence type="ECO:0007829" key="25">
    <source>
        <dbReference type="PDB" id="3RTP"/>
    </source>
</evidence>
<evidence type="ECO:0007829" key="26">
    <source>
        <dbReference type="PDB" id="4H3B"/>
    </source>
</evidence>
<evidence type="ECO:0007829" key="27">
    <source>
        <dbReference type="PDB" id="6EMH"/>
    </source>
</evidence>
<evidence type="ECO:0007829" key="28">
    <source>
        <dbReference type="PDB" id="7ORF"/>
    </source>
</evidence>
<evidence type="ECO:0007829" key="29">
    <source>
        <dbReference type="PDB" id="8WGF"/>
    </source>
</evidence>
<keyword id="KW-0002">3D-structure</keyword>
<keyword id="KW-0025">Alternative splicing</keyword>
<keyword id="KW-0067">ATP-binding</keyword>
<keyword id="KW-0090">Biological rhythms</keyword>
<keyword id="KW-0160">Chromosomal rearrangement</keyword>
<keyword id="KW-0963">Cytoplasm</keyword>
<keyword id="KW-0903">Direct protein sequencing</keyword>
<keyword id="KW-0887">Epilepsy</keyword>
<keyword id="KW-0991">Intellectual disability</keyword>
<keyword id="KW-0418">Kinase</keyword>
<keyword id="KW-0449">Lipoprotein</keyword>
<keyword id="KW-0472">Membrane</keyword>
<keyword id="KW-0496">Mitochondrion</keyword>
<keyword id="KW-0547">Nucleotide-binding</keyword>
<keyword id="KW-0539">Nucleus</keyword>
<keyword id="KW-0564">Palmitate</keyword>
<keyword id="KW-0597">Phosphoprotein</keyword>
<keyword id="KW-1267">Proteomics identification</keyword>
<keyword id="KW-1185">Reference proteome</keyword>
<keyword id="KW-0723">Serine/threonine-protein kinase</keyword>
<keyword id="KW-0808">Transferase</keyword>
<comment type="function">
    <text evidence="8 15 16">Serine/threonine-protein kinase involved in various processes such as neuronal proliferation, differentiation, migration and programmed cell death. Extracellular stimuli such as pro-inflammatory cytokines or physical stress stimulate the stress-activated protein kinase/c-Jun N-terminal kinase (SAP/JNK) signaling pathway. In this cascade, two dual specificity kinases MAP2K4/MKK4 and MAP2K7/MKK7 phosphorylate and activate MAPK10/JNK3. In turn, MAPK10/JNK3 phosphorylates a number of transcription factors, primarily components of AP-1 such as JUN and ATF2 and thus regulates AP-1 transcriptional activity. Plays regulatory roles in the signaling pathways during neuronal apoptosis. Phosphorylates the neuronal microtubule regulator STMN2. Acts in the regulation of the amyloid-beta precursor protein/APP signaling during neuronal differentiation by phosphorylating APP. Also participates in neurite growth in spiral ganglion neurons. Phosphorylates the CLOCK-BMAL1 heterodimer and plays a role in the photic regulation of the circadian clock (PubMed:22441692). Phosphorylates JUND and this phosphorylation is inhibited in the presence of MEN1 (PubMed:22327296).</text>
</comment>
<comment type="catalytic activity">
    <reaction>
        <text>L-seryl-[protein] + ATP = O-phospho-L-seryl-[protein] + ADP + H(+)</text>
        <dbReference type="Rhea" id="RHEA:17989"/>
        <dbReference type="Rhea" id="RHEA-COMP:9863"/>
        <dbReference type="Rhea" id="RHEA-COMP:11604"/>
        <dbReference type="ChEBI" id="CHEBI:15378"/>
        <dbReference type="ChEBI" id="CHEBI:29999"/>
        <dbReference type="ChEBI" id="CHEBI:30616"/>
        <dbReference type="ChEBI" id="CHEBI:83421"/>
        <dbReference type="ChEBI" id="CHEBI:456216"/>
        <dbReference type="EC" id="2.7.11.24"/>
    </reaction>
</comment>
<comment type="catalytic activity">
    <reaction>
        <text>L-threonyl-[protein] + ATP = O-phospho-L-threonyl-[protein] + ADP + H(+)</text>
        <dbReference type="Rhea" id="RHEA:46608"/>
        <dbReference type="Rhea" id="RHEA-COMP:11060"/>
        <dbReference type="Rhea" id="RHEA-COMP:11605"/>
        <dbReference type="ChEBI" id="CHEBI:15378"/>
        <dbReference type="ChEBI" id="CHEBI:30013"/>
        <dbReference type="ChEBI" id="CHEBI:30616"/>
        <dbReference type="ChEBI" id="CHEBI:61977"/>
        <dbReference type="ChEBI" id="CHEBI:456216"/>
        <dbReference type="EC" id="2.7.11.24"/>
    </reaction>
</comment>
<comment type="cofactor">
    <cofactor evidence="6">
        <name>Mg(2+)</name>
        <dbReference type="ChEBI" id="CHEBI:18420"/>
    </cofactor>
</comment>
<comment type="activity regulation">
    <text evidence="7 11">Activated by threonine and tyrosine phosphorylation by two dual specificity kinases, MAP2K4 and MAP2K7. MAP2K7 phosphorylates MAPK10 on Thr-221 causing a conformational change and a large increase in Vmax. MAP2K4 then phosphorylates Tyr-223 resulting in a further increase in Vmax. Inhibited by dual specificity phosphatases, such as DUSP1. Inhibited by HDAC9.</text>
</comment>
<comment type="subunit">
    <text evidence="2 3 9 11 13 15">Interacts with MAPKBP1 (By similarity). Interacts with MAPK8IP1/JIP-1 and MAPK8IP3/JIP-3/JSAP1 (By similarity). Interacts with SPAG9/MAPK8IP4/JIP4 (PubMed:15693750). Interacts with HDAC9 (PubMed:16611996). Interacts with ARRB2; the interaction enhances MAPK10 activation by MAP3K5 (PubMed:18435604). Interacts with SARM1 (By similarity). Interacts with JUND; interaction is inhibited in the presence of MEN1 (PubMed:22327296).</text>
</comment>
<comment type="interaction">
    <interactant intactId="EBI-713543">
        <id>P53779</id>
    </interactant>
    <interactant intactId="EBI-743313">
        <id>P49407</id>
        <label>ARRB1</label>
    </interactant>
    <organismsDiffer>false</organismsDiffer>
    <experiments>2</experiments>
</comment>
<comment type="interaction">
    <interactant intactId="EBI-713543">
        <id>P53779</id>
    </interactant>
    <interactant intactId="EBI-2479962">
        <id>Q92526</id>
        <label>CCT6B</label>
    </interactant>
    <organismsDiffer>false</organismsDiffer>
    <experiments>2</experiments>
</comment>
<comment type="interaction">
    <interactant intactId="EBI-713543">
        <id>P53779</id>
    </interactant>
    <interactant intactId="EBI-852823">
        <id>P05412</id>
        <label>JUN</label>
    </interactant>
    <organismsDiffer>false</organismsDiffer>
    <experiments>4</experiments>
</comment>
<comment type="interaction">
    <interactant intactId="EBI-713543">
        <id>P53779</id>
    </interactant>
    <interactant intactId="EBI-2682803">
        <id>P17535</id>
        <label>JUND</label>
    </interactant>
    <organismsDiffer>false</organismsDiffer>
    <experiments>2</experiments>
</comment>
<comment type="interaction">
    <interactant intactId="EBI-713543">
        <id>P53779</id>
    </interactant>
    <interactant intactId="EBI-73886">
        <id>Q04206</id>
        <label>RELA</label>
    </interactant>
    <organismsDiffer>false</organismsDiffer>
    <experiments>2</experiments>
</comment>
<comment type="subcellular location">
    <subcellularLocation>
        <location evidence="12">Cytoplasm</location>
    </subcellularLocation>
    <subcellularLocation>
        <location evidence="12">Membrane</location>
        <topology evidence="12">Lipid-anchor</topology>
    </subcellularLocation>
    <subcellularLocation>
        <location evidence="12">Nucleus</location>
    </subcellularLocation>
    <subcellularLocation>
        <location evidence="12">Mitochondrion</location>
    </subcellularLocation>
    <text evidence="1">Palmitoylation regulates MAPK10 trafficking to cytoskeleton. Recruited to the mitochondria in the presence of SARM1 (By similarity).</text>
</comment>
<comment type="alternative products">
    <event type="alternative splicing"/>
    <isoform>
        <id>P53779-1</id>
        <name>Alpha-2</name>
        <sequence type="displayed"/>
    </isoform>
    <isoform>
        <id>P53779-2</id>
        <name>Alpha-1</name>
        <sequence type="described" ref="VSP_004839"/>
    </isoform>
    <isoform>
        <id>P53779-3</id>
        <name>3</name>
        <sequence type="described" ref="VSP_041911"/>
    </isoform>
    <text>A similar low level of binding to substrates is observed for isoform alpha-1 and isoform alpha-2. However, there is no correlation between binding and phosphorylation, which is achieved about at the same efficiency by all isoforms.</text>
</comment>
<comment type="tissue specificity">
    <text>Specific to a subset of neurons in the nervous system. Present in the hippocampus and areas, cerebellum, striatum, brain stem, and weakly in the spinal cord. Very weak expression in testis and kidney.</text>
</comment>
<comment type="domain">
    <text>The TXY motif contains the threonine and tyrosine residues whose phosphorylation activates the MAP kinases.</text>
</comment>
<comment type="PTM">
    <text evidence="6">Dually phosphorylated on Thr-221 and Tyr-223 by MAP2K4 and MAP2K7, which activates the enzyme. MAP2K7 shows a strong preference for Thr-221 while MAP2K4 phosphorylates Tyr-223 preferentially. Weakly autophosphorylated on threonine and tyrosine residues in vitro.</text>
</comment>
<comment type="PTM">
    <text evidence="14">Palmitoylation regulates subcellular location and axonal development.</text>
</comment>
<comment type="mass spectrometry" mass="44070.0" method="Electrospray" evidence="6"/>
<comment type="disease">
    <text evidence="10">A chromosomal aberration involving MAPK10 has been found in a single patient with pharmacoresistant epileptic encephalopathy. Translocation t(Y;4)(q11.2;q21) which causes MAPK10 truncation.</text>
</comment>
<comment type="similarity">
    <text evidence="20">Belongs to the protein kinase superfamily. CMGC Ser/Thr protein kinase family. MAP kinase subfamily.</text>
</comment>
<comment type="sequence caution" evidence="20">
    <conflict type="erroneous initiation">
        <sequence resource="EMBL-CDS" id="BAG51956"/>
    </conflict>
    <text>Truncated N-terminus.</text>
</comment>
<comment type="online information" name="Atlas of Genetics and Cytogenetics in Oncology and Haematology">
    <link uri="https://atlasgeneticsoncology.org/gene/427/JNK3"/>
</comment>
<protein>
    <recommendedName>
        <fullName>Mitogen-activated protein kinase 10</fullName>
        <shortName>MAP kinase 10</shortName>
        <shortName>MAPK 10</shortName>
        <ecNumber>2.7.11.24</ecNumber>
    </recommendedName>
    <alternativeName>
        <fullName>MAP kinase p49 3F12</fullName>
    </alternativeName>
    <alternativeName>
        <fullName>Stress-activated protein kinase 1b</fullName>
        <shortName>SAPK1b</shortName>
    </alternativeName>
    <alternativeName>
        <fullName>Stress-activated protein kinase JNK3</fullName>
    </alternativeName>
    <alternativeName>
        <fullName>c-Jun N-terminal kinase 3</fullName>
    </alternativeName>
</protein>
<feature type="chain" id="PRO_0000186277" description="Mitogen-activated protein kinase 10">
    <location>
        <begin position="1"/>
        <end position="464"/>
    </location>
</feature>
<feature type="domain" description="Protein kinase" evidence="4">
    <location>
        <begin position="64"/>
        <end position="359"/>
    </location>
</feature>
<feature type="region of interest" description="Disordered" evidence="5">
    <location>
        <begin position="405"/>
        <end position="464"/>
    </location>
</feature>
<feature type="short sequence motif" description="TXY">
    <location>
        <begin position="221"/>
        <end position="223"/>
    </location>
</feature>
<feature type="compositionally biased region" description="Low complexity" evidence="5">
    <location>
        <begin position="423"/>
        <end position="432"/>
    </location>
</feature>
<feature type="compositionally biased region" description="Polar residues" evidence="5">
    <location>
        <begin position="433"/>
        <end position="454"/>
    </location>
</feature>
<feature type="active site" description="Proton acceptor">
    <location>
        <position position="189"/>
    </location>
</feature>
<feature type="binding site">
    <location>
        <begin position="70"/>
        <end position="78"/>
    </location>
    <ligand>
        <name>ATP</name>
        <dbReference type="ChEBI" id="CHEBI:30616"/>
    </ligand>
</feature>
<feature type="binding site">
    <location>
        <position position="93"/>
    </location>
    <ligand>
        <name>ATP</name>
        <dbReference type="ChEBI" id="CHEBI:30616"/>
    </ligand>
</feature>
<feature type="modified residue" description="Phosphothreonine; by MAP2K7" evidence="6">
    <location>
        <position position="221"/>
    </location>
</feature>
<feature type="modified residue" description="Phosphotyrosine; by MAP2K4" evidence="6">
    <location>
        <position position="223"/>
    </location>
</feature>
<feature type="lipid moiety-binding region" description="S-palmitoyl cysteine" evidence="21">
    <location>
        <position position="462"/>
    </location>
</feature>
<feature type="lipid moiety-binding region" description="S-palmitoyl cysteine" evidence="21">
    <location>
        <position position="463"/>
    </location>
</feature>
<feature type="splice variant" id="VSP_041911" description="In isoform 3." evidence="17">
    <location>
        <begin position="1"/>
        <end position="38"/>
    </location>
</feature>
<feature type="splice variant" id="VSP_004839" description="In isoform Alpha-1." evidence="17 18 19">
    <original>GAAVNSSESLPPSSSVNDISSMSTDQTLASDTDSSLEASAGPLGCCR</original>
    <variation>AQVQQ</variation>
    <location>
        <begin position="418"/>
        <end position="464"/>
    </location>
</feature>
<feature type="mutagenesis site" description="Loss of palmitoylation." evidence="14">
    <original>C</original>
    <variation>S</variation>
    <location>
        <position position="462"/>
    </location>
</feature>
<feature type="mutagenesis site" description="Loss of palmitoylation." evidence="14">
    <original>C</original>
    <variation>S</variation>
    <location>
        <position position="463"/>
    </location>
</feature>
<feature type="sequence conflict" description="In Ref. 3; BAG51956." evidence="20" ref="3">
    <original>D</original>
    <variation>G</variation>
    <location>
        <position position="162"/>
    </location>
</feature>
<feature type="helix" evidence="29">
    <location>
        <begin position="45"/>
        <end position="47"/>
    </location>
</feature>
<feature type="strand" evidence="23">
    <location>
        <begin position="48"/>
        <end position="53"/>
    </location>
</feature>
<feature type="strand" evidence="23">
    <location>
        <begin position="56"/>
        <end position="61"/>
    </location>
</feature>
<feature type="strand" evidence="23">
    <location>
        <begin position="64"/>
        <end position="69"/>
    </location>
</feature>
<feature type="strand" evidence="23">
    <location>
        <begin position="77"/>
        <end position="83"/>
    </location>
</feature>
<feature type="turn" evidence="23">
    <location>
        <begin position="84"/>
        <end position="87"/>
    </location>
</feature>
<feature type="strand" evidence="23">
    <location>
        <begin position="88"/>
        <end position="97"/>
    </location>
</feature>
<feature type="helix" evidence="23">
    <location>
        <begin position="98"/>
        <end position="100"/>
    </location>
</feature>
<feature type="helix" evidence="23">
    <location>
        <begin position="102"/>
        <end position="114"/>
    </location>
</feature>
<feature type="turn" evidence="23">
    <location>
        <begin position="115"/>
        <end position="117"/>
    </location>
</feature>
<feature type="strand" evidence="22">
    <location>
        <begin position="121"/>
        <end position="123"/>
    </location>
</feature>
<feature type="strand" evidence="23">
    <location>
        <begin position="127"/>
        <end position="130"/>
    </location>
</feature>
<feature type="turn" evidence="23">
    <location>
        <begin position="136"/>
        <end position="138"/>
    </location>
</feature>
<feature type="strand" evidence="23">
    <location>
        <begin position="142"/>
        <end position="147"/>
    </location>
</feature>
<feature type="strand" evidence="23">
    <location>
        <begin position="150"/>
        <end position="152"/>
    </location>
</feature>
<feature type="helix" evidence="23">
    <location>
        <begin position="153"/>
        <end position="157"/>
    </location>
</feature>
<feature type="helix" evidence="23">
    <location>
        <begin position="163"/>
        <end position="182"/>
    </location>
</feature>
<feature type="helix" evidence="23">
    <location>
        <begin position="192"/>
        <end position="194"/>
    </location>
</feature>
<feature type="strand" evidence="23">
    <location>
        <begin position="195"/>
        <end position="197"/>
    </location>
</feature>
<feature type="strand" evidence="25">
    <location>
        <begin position="199"/>
        <end position="201"/>
    </location>
</feature>
<feature type="strand" evidence="23">
    <location>
        <begin position="203"/>
        <end position="205"/>
    </location>
</feature>
<feature type="strand" evidence="24">
    <location>
        <begin position="207"/>
        <end position="209"/>
    </location>
</feature>
<feature type="turn" evidence="28">
    <location>
        <begin position="212"/>
        <end position="215"/>
    </location>
</feature>
<feature type="helix" evidence="26">
    <location>
        <begin position="216"/>
        <end position="219"/>
    </location>
</feature>
<feature type="strand" evidence="26">
    <location>
        <begin position="220"/>
        <end position="222"/>
    </location>
</feature>
<feature type="helix" evidence="26">
    <location>
        <begin position="227"/>
        <end position="229"/>
    </location>
</feature>
<feature type="helix" evidence="23">
    <location>
        <begin position="232"/>
        <end position="235"/>
    </location>
</feature>
<feature type="helix" evidence="23">
    <location>
        <begin position="244"/>
        <end position="258"/>
    </location>
</feature>
<feature type="helix" evidence="23">
    <location>
        <begin position="268"/>
        <end position="279"/>
    </location>
</feature>
<feature type="helix" evidence="23">
    <location>
        <begin position="284"/>
        <end position="287"/>
    </location>
</feature>
<feature type="helix" evidence="23">
    <location>
        <begin position="292"/>
        <end position="299"/>
    </location>
</feature>
<feature type="helix" evidence="23">
    <location>
        <begin position="309"/>
        <end position="312"/>
    </location>
</feature>
<feature type="helix" evidence="23">
    <location>
        <begin position="315"/>
        <end position="317"/>
    </location>
</feature>
<feature type="helix" evidence="23">
    <location>
        <begin position="323"/>
        <end position="339"/>
    </location>
</feature>
<feature type="turn" evidence="23">
    <location>
        <begin position="344"/>
        <end position="346"/>
    </location>
</feature>
<feature type="helix" evidence="23">
    <location>
        <begin position="350"/>
        <end position="355"/>
    </location>
</feature>
<feature type="turn" evidence="23">
    <location>
        <begin position="357"/>
        <end position="361"/>
    </location>
</feature>
<feature type="helix" evidence="23">
    <location>
        <begin position="365"/>
        <end position="368"/>
    </location>
</feature>
<feature type="turn" evidence="27">
    <location>
        <begin position="378"/>
        <end position="382"/>
    </location>
</feature>
<feature type="helix" evidence="23">
    <location>
        <begin position="387"/>
        <end position="399"/>
    </location>
</feature>
<dbReference type="EC" id="2.7.11.24"/>
<dbReference type="EMBL" id="U07620">
    <property type="protein sequence ID" value="AAC50101.1"/>
    <property type="molecule type" value="mRNA"/>
</dbReference>
<dbReference type="EMBL" id="U34819">
    <property type="protein sequence ID" value="AAC50604.1"/>
    <property type="molecule type" value="mRNA"/>
</dbReference>
<dbReference type="EMBL" id="U34820">
    <property type="protein sequence ID" value="AAC50605.1"/>
    <property type="molecule type" value="mRNA"/>
</dbReference>
<dbReference type="EMBL" id="AK057723">
    <property type="protein sequence ID" value="BAG51956.1"/>
    <property type="status" value="ALT_INIT"/>
    <property type="molecule type" value="mRNA"/>
</dbReference>
<dbReference type="EMBL" id="AK124791">
    <property type="protein sequence ID" value="BAG54096.1"/>
    <property type="molecule type" value="mRNA"/>
</dbReference>
<dbReference type="EMBL" id="AC096953">
    <property type="status" value="NOT_ANNOTATED_CDS"/>
    <property type="molecule type" value="Genomic_DNA"/>
</dbReference>
<dbReference type="EMBL" id="AC104059">
    <property type="status" value="NOT_ANNOTATED_CDS"/>
    <property type="molecule type" value="Genomic_DNA"/>
</dbReference>
<dbReference type="EMBL" id="AC104827">
    <property type="status" value="NOT_ANNOTATED_CDS"/>
    <property type="molecule type" value="Genomic_DNA"/>
</dbReference>
<dbReference type="EMBL" id="AC108054">
    <property type="status" value="NOT_ANNOTATED_CDS"/>
    <property type="molecule type" value="Genomic_DNA"/>
</dbReference>
<dbReference type="EMBL" id="AC110076">
    <property type="status" value="NOT_ANNOTATED_CDS"/>
    <property type="molecule type" value="Genomic_DNA"/>
</dbReference>
<dbReference type="EMBL" id="CH471057">
    <property type="protein sequence ID" value="EAX05963.1"/>
    <property type="molecule type" value="Genomic_DNA"/>
</dbReference>
<dbReference type="EMBL" id="BC035057">
    <property type="protein sequence ID" value="AAH35057.1"/>
    <property type="molecule type" value="mRNA"/>
</dbReference>
<dbReference type="CCDS" id="CCDS34026.1">
    <molecule id="P53779-1"/>
</dbReference>
<dbReference type="CCDS" id="CCDS3612.1">
    <molecule id="P53779-3"/>
</dbReference>
<dbReference type="CCDS" id="CCDS43247.1">
    <molecule id="P53779-2"/>
</dbReference>
<dbReference type="PIR" id="S71104">
    <property type="entry name" value="S71104"/>
</dbReference>
<dbReference type="RefSeq" id="NP_001304996.1">
    <property type="nucleotide sequence ID" value="NM_001318067.1"/>
</dbReference>
<dbReference type="RefSeq" id="NP_001304997.1">
    <property type="nucleotide sequence ID" value="NM_001318068.1"/>
</dbReference>
<dbReference type="RefSeq" id="NP_001304998.1">
    <property type="nucleotide sequence ID" value="NM_001318069.1"/>
</dbReference>
<dbReference type="RefSeq" id="NP_001338553.1">
    <molecule id="P53779-3"/>
    <property type="nucleotide sequence ID" value="NM_001351624.2"/>
</dbReference>
<dbReference type="RefSeq" id="NP_002744.1">
    <molecule id="P53779-2"/>
    <property type="nucleotide sequence ID" value="NM_002753.6"/>
</dbReference>
<dbReference type="RefSeq" id="NP_620446.1">
    <molecule id="P53779-3"/>
    <property type="nucleotide sequence ID" value="NM_138980.4"/>
</dbReference>
<dbReference type="RefSeq" id="NP_620448.1">
    <molecule id="P53779-1"/>
    <property type="nucleotide sequence ID" value="NM_138982.4"/>
</dbReference>
<dbReference type="RefSeq" id="XP_005263186.1">
    <property type="nucleotide sequence ID" value="XM_005263129.2"/>
</dbReference>
<dbReference type="RefSeq" id="XP_005263187.1">
    <property type="nucleotide sequence ID" value="XM_005263130.2"/>
</dbReference>
<dbReference type="RefSeq" id="XP_005263192.1">
    <property type="nucleotide sequence ID" value="XM_005263135.3"/>
</dbReference>
<dbReference type="RefSeq" id="XP_006714331.1">
    <property type="nucleotide sequence ID" value="XM_006714268.2"/>
</dbReference>
<dbReference type="RefSeq" id="XP_011530419.1">
    <property type="nucleotide sequence ID" value="XM_011532117.2"/>
</dbReference>
<dbReference type="RefSeq" id="XP_011530420.1">
    <property type="nucleotide sequence ID" value="XM_011532118.2"/>
</dbReference>
<dbReference type="RefSeq" id="XP_011530422.1">
    <property type="nucleotide sequence ID" value="XM_011532120.2"/>
</dbReference>
<dbReference type="RefSeq" id="XP_011530423.1">
    <property type="nucleotide sequence ID" value="XM_011532121.2"/>
</dbReference>
<dbReference type="RefSeq" id="XP_016863908.1">
    <property type="nucleotide sequence ID" value="XM_017008419.1"/>
</dbReference>
<dbReference type="RefSeq" id="XP_016863909.1">
    <property type="nucleotide sequence ID" value="XM_017008420.1"/>
</dbReference>
<dbReference type="RefSeq" id="XP_016863910.1">
    <property type="nucleotide sequence ID" value="XM_017008421.1"/>
</dbReference>
<dbReference type="RefSeq" id="XP_016863912.1">
    <property type="nucleotide sequence ID" value="XM_017008423.1"/>
</dbReference>
<dbReference type="RefSeq" id="XP_016863913.1">
    <property type="nucleotide sequence ID" value="XM_017008424.1"/>
</dbReference>
<dbReference type="RefSeq" id="XP_016863914.1">
    <property type="nucleotide sequence ID" value="XM_017008425.1"/>
</dbReference>
<dbReference type="RefSeq" id="XP_016863915.1">
    <property type="nucleotide sequence ID" value="XM_017008426.1"/>
</dbReference>
<dbReference type="RefSeq" id="XP_016863918.1">
    <property type="nucleotide sequence ID" value="XM_017008429.1"/>
</dbReference>
<dbReference type="RefSeq" id="XP_016863919.1">
    <property type="nucleotide sequence ID" value="XM_017008430.1"/>
</dbReference>
<dbReference type="RefSeq" id="XP_016863920.1">
    <property type="nucleotide sequence ID" value="XM_017008431.1"/>
</dbReference>
<dbReference type="RefSeq" id="XP_016863921.1">
    <property type="nucleotide sequence ID" value="XM_017008432.1"/>
</dbReference>
<dbReference type="PDB" id="1JNK">
    <property type="method" value="X-ray"/>
    <property type="resolution" value="2.30 A"/>
    <property type="chains" value="A=1-423"/>
</dbReference>
<dbReference type="PDB" id="1PMN">
    <property type="method" value="X-ray"/>
    <property type="resolution" value="2.20 A"/>
    <property type="chains" value="A=40-401"/>
</dbReference>
<dbReference type="PDB" id="1PMU">
    <property type="method" value="X-ray"/>
    <property type="resolution" value="2.70 A"/>
    <property type="chains" value="A=40-401"/>
</dbReference>
<dbReference type="PDB" id="1PMV">
    <property type="method" value="X-ray"/>
    <property type="resolution" value="2.50 A"/>
    <property type="chains" value="A=40-401"/>
</dbReference>
<dbReference type="PDB" id="2B1P">
    <property type="method" value="X-ray"/>
    <property type="resolution" value="1.90 A"/>
    <property type="chains" value="A=46-400"/>
</dbReference>
<dbReference type="PDB" id="2EXC">
    <property type="method" value="X-ray"/>
    <property type="resolution" value="2.75 A"/>
    <property type="chains" value="X=45-400"/>
</dbReference>
<dbReference type="PDB" id="2O0U">
    <property type="method" value="X-ray"/>
    <property type="resolution" value="2.10 A"/>
    <property type="chains" value="A=39-402"/>
</dbReference>
<dbReference type="PDB" id="2O2U">
    <property type="method" value="X-ray"/>
    <property type="resolution" value="2.45 A"/>
    <property type="chains" value="A=39-402"/>
</dbReference>
<dbReference type="PDB" id="2OK1">
    <property type="method" value="X-ray"/>
    <property type="resolution" value="2.40 A"/>
    <property type="chains" value="A=40-402"/>
</dbReference>
<dbReference type="PDB" id="2P33">
    <property type="method" value="X-ray"/>
    <property type="resolution" value="2.40 A"/>
    <property type="chains" value="A=40-402"/>
</dbReference>
<dbReference type="PDB" id="2R9S">
    <property type="method" value="X-ray"/>
    <property type="resolution" value="2.40 A"/>
    <property type="chains" value="A/B=46-401"/>
</dbReference>
<dbReference type="PDB" id="2WAJ">
    <property type="method" value="X-ray"/>
    <property type="resolution" value="2.40 A"/>
    <property type="chains" value="A=39-402"/>
</dbReference>
<dbReference type="PDB" id="2ZDT">
    <property type="method" value="X-ray"/>
    <property type="resolution" value="2.00 A"/>
    <property type="chains" value="A=39-402"/>
</dbReference>
<dbReference type="PDB" id="2ZDU">
    <property type="method" value="X-ray"/>
    <property type="resolution" value="2.50 A"/>
    <property type="chains" value="A=39-402"/>
</dbReference>
<dbReference type="PDB" id="3CGF">
    <property type="method" value="X-ray"/>
    <property type="resolution" value="3.00 A"/>
    <property type="chains" value="A=40-402"/>
</dbReference>
<dbReference type="PDB" id="3CGO">
    <property type="method" value="X-ray"/>
    <property type="resolution" value="3.00 A"/>
    <property type="chains" value="A=40-402"/>
</dbReference>
<dbReference type="PDB" id="3DA6">
    <property type="method" value="X-ray"/>
    <property type="resolution" value="2.00 A"/>
    <property type="chains" value="A=39-402"/>
</dbReference>
<dbReference type="PDB" id="3FI2">
    <property type="method" value="X-ray"/>
    <property type="resolution" value="2.28 A"/>
    <property type="chains" value="A=39-402"/>
</dbReference>
<dbReference type="PDB" id="3FI3">
    <property type="method" value="X-ray"/>
    <property type="resolution" value="2.20 A"/>
    <property type="chains" value="A=39-402"/>
</dbReference>
<dbReference type="PDB" id="3FV8">
    <property type="method" value="X-ray"/>
    <property type="resolution" value="2.28 A"/>
    <property type="chains" value="A=39-402"/>
</dbReference>
<dbReference type="PDB" id="3G90">
    <property type="method" value="X-ray"/>
    <property type="resolution" value="2.40 A"/>
    <property type="chains" value="X=40-402"/>
</dbReference>
<dbReference type="PDB" id="3G9L">
    <property type="method" value="X-ray"/>
    <property type="resolution" value="2.20 A"/>
    <property type="chains" value="X=40-402"/>
</dbReference>
<dbReference type="PDB" id="3G9N">
    <property type="method" value="X-ray"/>
    <property type="resolution" value="2.80 A"/>
    <property type="chains" value="A=40-402"/>
</dbReference>
<dbReference type="PDB" id="3KVX">
    <property type="method" value="X-ray"/>
    <property type="resolution" value="2.40 A"/>
    <property type="chains" value="A=39-402"/>
</dbReference>
<dbReference type="PDB" id="3OXI">
    <property type="method" value="X-ray"/>
    <property type="resolution" value="2.20 A"/>
    <property type="chains" value="A=40-401"/>
</dbReference>
<dbReference type="PDB" id="3OY1">
    <property type="method" value="X-ray"/>
    <property type="resolution" value="1.70 A"/>
    <property type="chains" value="A=40-401"/>
</dbReference>
<dbReference type="PDB" id="3PTG">
    <property type="method" value="X-ray"/>
    <property type="resolution" value="2.43 A"/>
    <property type="chains" value="A=40-401"/>
</dbReference>
<dbReference type="PDB" id="3RTP">
    <property type="method" value="X-ray"/>
    <property type="resolution" value="2.40 A"/>
    <property type="chains" value="A=40-401"/>
</dbReference>
<dbReference type="PDB" id="3TTI">
    <property type="method" value="X-ray"/>
    <property type="resolution" value="2.20 A"/>
    <property type="chains" value="A=1-464"/>
</dbReference>
<dbReference type="PDB" id="3TTJ">
    <property type="method" value="X-ray"/>
    <property type="resolution" value="2.10 A"/>
    <property type="chains" value="A=1-464"/>
</dbReference>
<dbReference type="PDB" id="3V6R">
    <property type="method" value="X-ray"/>
    <property type="resolution" value="2.60 A"/>
    <property type="chains" value="A/B=39-402"/>
</dbReference>
<dbReference type="PDB" id="3V6S">
    <property type="method" value="X-ray"/>
    <property type="resolution" value="2.97 A"/>
    <property type="chains" value="A/B=39-402"/>
</dbReference>
<dbReference type="PDB" id="4H36">
    <property type="method" value="X-ray"/>
    <property type="resolution" value="3.00 A"/>
    <property type="chains" value="A=45-400"/>
</dbReference>
<dbReference type="PDB" id="4H39">
    <property type="method" value="X-ray"/>
    <property type="resolution" value="1.99 A"/>
    <property type="chains" value="A=45-400"/>
</dbReference>
<dbReference type="PDB" id="4H3B">
    <property type="method" value="X-ray"/>
    <property type="resolution" value="2.08 A"/>
    <property type="chains" value="A/C=45-400"/>
</dbReference>
<dbReference type="PDB" id="4KKE">
    <property type="method" value="X-ray"/>
    <property type="resolution" value="2.20 A"/>
    <property type="chains" value="A=40-402"/>
</dbReference>
<dbReference type="PDB" id="4KKG">
    <property type="method" value="X-ray"/>
    <property type="resolution" value="2.40 A"/>
    <property type="chains" value="A=40-402"/>
</dbReference>
<dbReference type="PDB" id="4KKH">
    <property type="method" value="X-ray"/>
    <property type="resolution" value="2.00 A"/>
    <property type="chains" value="A=40-402"/>
</dbReference>
<dbReference type="PDB" id="4U79">
    <property type="method" value="X-ray"/>
    <property type="resolution" value="2.23 A"/>
    <property type="chains" value="A=39-402"/>
</dbReference>
<dbReference type="PDB" id="4W4V">
    <property type="method" value="X-ray"/>
    <property type="resolution" value="2.01 A"/>
    <property type="chains" value="A=39-402"/>
</dbReference>
<dbReference type="PDB" id="4W4W">
    <property type="method" value="X-ray"/>
    <property type="resolution" value="1.90 A"/>
    <property type="chains" value="A=39-402"/>
</dbReference>
<dbReference type="PDB" id="4W4X">
    <property type="method" value="X-ray"/>
    <property type="resolution" value="2.65 A"/>
    <property type="chains" value="A=39-402"/>
</dbReference>
<dbReference type="PDB" id="4W4Y">
    <property type="method" value="X-ray"/>
    <property type="resolution" value="2.30 A"/>
    <property type="chains" value="A=39-402"/>
</dbReference>
<dbReference type="PDB" id="4WHZ">
    <property type="method" value="X-ray"/>
    <property type="resolution" value="1.79 A"/>
    <property type="chains" value="A=39-423"/>
</dbReference>
<dbReference type="PDB" id="4X21">
    <property type="method" value="X-ray"/>
    <property type="resolution" value="1.95 A"/>
    <property type="chains" value="A/B=39-402"/>
</dbReference>
<dbReference type="PDB" id="4Y46">
    <property type="method" value="X-ray"/>
    <property type="resolution" value="2.04 A"/>
    <property type="chains" value="A=39-402"/>
</dbReference>
<dbReference type="PDB" id="4Y5H">
    <property type="method" value="X-ray"/>
    <property type="resolution" value="2.06 A"/>
    <property type="chains" value="A=39-402"/>
</dbReference>
<dbReference type="PDB" id="4Z9L">
    <property type="method" value="X-ray"/>
    <property type="resolution" value="2.10 A"/>
    <property type="chains" value="A=40-401"/>
</dbReference>
<dbReference type="PDB" id="6EKD">
    <property type="method" value="X-ray"/>
    <property type="resolution" value="2.10 A"/>
    <property type="chains" value="A=39-402"/>
</dbReference>
<dbReference type="PDB" id="6EMH">
    <property type="method" value="X-ray"/>
    <property type="resolution" value="1.76 A"/>
    <property type="chains" value="A/B/C/D=39-402"/>
</dbReference>
<dbReference type="PDB" id="6EQ9">
    <property type="method" value="X-ray"/>
    <property type="resolution" value="1.83 A"/>
    <property type="chains" value="A/B=39-402"/>
</dbReference>
<dbReference type="PDB" id="7KSI">
    <property type="method" value="X-ray"/>
    <property type="resolution" value="1.73 A"/>
    <property type="chains" value="A=1-464"/>
</dbReference>
<dbReference type="PDB" id="7KSJ">
    <property type="method" value="X-ray"/>
    <property type="resolution" value="2.06 A"/>
    <property type="chains" value="A=1-464"/>
</dbReference>
<dbReference type="PDB" id="7KSK">
    <property type="method" value="X-ray"/>
    <property type="resolution" value="1.84 A"/>
    <property type="chains" value="A=1-464"/>
</dbReference>
<dbReference type="PDB" id="7ORE">
    <property type="method" value="X-ray"/>
    <property type="resolution" value="2.18 A"/>
    <property type="chains" value="A=39-402"/>
</dbReference>
<dbReference type="PDB" id="7ORF">
    <property type="method" value="X-ray"/>
    <property type="resolution" value="1.70 A"/>
    <property type="chains" value="A=39-402"/>
</dbReference>
<dbReference type="PDB" id="7S1N">
    <property type="method" value="X-ray"/>
    <property type="resolution" value="2.11 A"/>
    <property type="chains" value="A=1-464"/>
</dbReference>
<dbReference type="PDB" id="7YL1">
    <property type="method" value="X-ray"/>
    <property type="resolution" value="2.48 A"/>
    <property type="chains" value="A=1-464"/>
</dbReference>
<dbReference type="PDB" id="8BZP">
    <property type="method" value="X-ray"/>
    <property type="resolution" value="1.86 A"/>
    <property type="chains" value="A/B=39-402"/>
</dbReference>
<dbReference type="PDB" id="8ENJ">
    <property type="method" value="X-ray"/>
    <property type="resolution" value="2.81 A"/>
    <property type="chains" value="A=1-464"/>
</dbReference>
<dbReference type="PDB" id="8VNX">
    <property type="method" value="X-ray"/>
    <property type="resolution" value="2.00 A"/>
    <property type="chains" value="A=1-464"/>
</dbReference>
<dbReference type="PDB" id="8VO4">
    <property type="method" value="X-ray"/>
    <property type="resolution" value="2.07 A"/>
    <property type="chains" value="A=1-464"/>
</dbReference>
<dbReference type="PDB" id="8VS0">
    <property type="method" value="X-ray"/>
    <property type="resolution" value="2.46 A"/>
    <property type="chains" value="A=1-464"/>
</dbReference>
<dbReference type="PDB" id="8VTF">
    <property type="method" value="X-ray"/>
    <property type="resolution" value="2.40 A"/>
    <property type="chains" value="A=1-464"/>
</dbReference>
<dbReference type="PDB" id="8WGF">
    <property type="method" value="X-ray"/>
    <property type="resolution" value="1.85 A"/>
    <property type="chains" value="A=39-402"/>
</dbReference>
<dbReference type="PDBsum" id="1JNK"/>
<dbReference type="PDBsum" id="1PMN"/>
<dbReference type="PDBsum" id="1PMU"/>
<dbReference type="PDBsum" id="1PMV"/>
<dbReference type="PDBsum" id="2B1P"/>
<dbReference type="PDBsum" id="2EXC"/>
<dbReference type="PDBsum" id="2O0U"/>
<dbReference type="PDBsum" id="2O2U"/>
<dbReference type="PDBsum" id="2OK1"/>
<dbReference type="PDBsum" id="2P33"/>
<dbReference type="PDBsum" id="2R9S"/>
<dbReference type="PDBsum" id="2WAJ"/>
<dbReference type="PDBsum" id="2ZDT"/>
<dbReference type="PDBsum" id="2ZDU"/>
<dbReference type="PDBsum" id="3CGF"/>
<dbReference type="PDBsum" id="3CGO"/>
<dbReference type="PDBsum" id="3DA6"/>
<dbReference type="PDBsum" id="3FI2"/>
<dbReference type="PDBsum" id="3FI3"/>
<dbReference type="PDBsum" id="3FV8"/>
<dbReference type="PDBsum" id="3G90"/>
<dbReference type="PDBsum" id="3G9L"/>
<dbReference type="PDBsum" id="3G9N"/>
<dbReference type="PDBsum" id="3KVX"/>
<dbReference type="PDBsum" id="3OXI"/>
<dbReference type="PDBsum" id="3OY1"/>
<dbReference type="PDBsum" id="3PTG"/>
<dbReference type="PDBsum" id="3RTP"/>
<dbReference type="PDBsum" id="3TTI"/>
<dbReference type="PDBsum" id="3TTJ"/>
<dbReference type="PDBsum" id="3V6R"/>
<dbReference type="PDBsum" id="3V6S"/>
<dbReference type="PDBsum" id="4H36"/>
<dbReference type="PDBsum" id="4H39"/>
<dbReference type="PDBsum" id="4H3B"/>
<dbReference type="PDBsum" id="4KKE"/>
<dbReference type="PDBsum" id="4KKG"/>
<dbReference type="PDBsum" id="4KKH"/>
<dbReference type="PDBsum" id="4U79"/>
<dbReference type="PDBsum" id="4W4V"/>
<dbReference type="PDBsum" id="4W4W"/>
<dbReference type="PDBsum" id="4W4X"/>
<dbReference type="PDBsum" id="4W4Y"/>
<dbReference type="PDBsum" id="4WHZ"/>
<dbReference type="PDBsum" id="4X21"/>
<dbReference type="PDBsum" id="4Y46"/>
<dbReference type="PDBsum" id="4Y5H"/>
<dbReference type="PDBsum" id="4Z9L"/>
<dbReference type="PDBsum" id="6EKD"/>
<dbReference type="PDBsum" id="6EMH"/>
<dbReference type="PDBsum" id="6EQ9"/>
<dbReference type="PDBsum" id="7KSI"/>
<dbReference type="PDBsum" id="7KSJ"/>
<dbReference type="PDBsum" id="7KSK"/>
<dbReference type="PDBsum" id="7ORE"/>
<dbReference type="PDBsum" id="7ORF"/>
<dbReference type="PDBsum" id="7S1N"/>
<dbReference type="PDBsum" id="7YL1"/>
<dbReference type="PDBsum" id="8BZP"/>
<dbReference type="PDBsum" id="8ENJ"/>
<dbReference type="PDBsum" id="8VNX"/>
<dbReference type="PDBsum" id="8VO4"/>
<dbReference type="PDBsum" id="8VS0"/>
<dbReference type="PDBsum" id="8VTF"/>
<dbReference type="PDBsum" id="8WGF"/>
<dbReference type="SMR" id="P53779"/>
<dbReference type="BioGRID" id="111588">
    <property type="interactions" value="57"/>
</dbReference>
<dbReference type="CORUM" id="P53779"/>
<dbReference type="DIP" id="DIP-1015N"/>
<dbReference type="ELM" id="P53779"/>
<dbReference type="FunCoup" id="P53779">
    <property type="interactions" value="4916"/>
</dbReference>
<dbReference type="IntAct" id="P53779">
    <property type="interactions" value="27"/>
</dbReference>
<dbReference type="MINT" id="P53779"/>
<dbReference type="BindingDB" id="P53779"/>
<dbReference type="ChEMBL" id="CHEMBL2637"/>
<dbReference type="DrugBank" id="DB08011">
    <property type="generic name" value="(3E)-5-fluoro-1-[(6-fluoro-4H-1,3-benzodioxin-8-yl)methyl]-1H-indole-2,3-dione 3-oxime"/>
</dbReference>
<dbReference type="DrugBank" id="DB08010">
    <property type="generic name" value="(3Z)-1-[(6-fluoro-4H-1,3-benzodioxin-8-yl)methyl]-4-[(E)-2-phenylethenyl]-1H-indole-2,3-dione 3-oxime"/>
</dbReference>
<dbReference type="DrugBank" id="DB08015">
    <property type="generic name" value="(3Z)-1-[(6-fluoro-4H-1,3-benzodioxin-8-yl)methyl]-4-phenyl-1H-indole-2,3-dione 3-oxime"/>
</dbReference>
<dbReference type="DrugBank" id="DB08555">
    <property type="generic name" value="1-(3-bromophenyl)-7-chloro-6-methoxy-3,4-dihydroisoquinoline"/>
</dbReference>
<dbReference type="DrugBank" id="DB08026">
    <property type="generic name" value="2-{4-[(4-imidazo[1,2-a]pyridin-3-ylpyrimidin-2-yl)amino]piperidin-1-yl}-N-methylacetamide"/>
</dbReference>
<dbReference type="DrugBank" id="DB08005">
    <property type="generic name" value="4-{[5-chloro-4-(1H-indol-3-yl)pyrimidin-2-yl]amino}-N-ethylpiperidine-1-carboxamide"/>
</dbReference>
<dbReference type="DrugBank" id="DB08021">
    <property type="generic name" value="5-bromo-N-(3-chloro-2-(4-(prop-2-ynyl)piperazin-1-yl)phenyl)furan-2-carboxamide"/>
</dbReference>
<dbReference type="DrugBank" id="DB03623">
    <property type="generic name" value="9-(4-Hydroxyphenyl)-2,7-Phenanthroline"/>
</dbReference>
<dbReference type="DrugBank" id="DB12432">
    <property type="generic name" value="CC-401"/>
</dbReference>
<dbReference type="DrugBank" id="DB02388">
    <property type="generic name" value="Cyclohexyl-{4-[5-(3,4-Dichlorophenyl)-2-Piperidin-4-Yl-3-Propyl-3h-Imidazol-4-Yl]-Pyrimidin-2-Yl}Amine"/>
</dbReference>
<dbReference type="DrugBank" id="DB03084">
    <property type="generic name" value="Cyclopropyl-{4-[5-(3,4-Dichlorophenyl)-2-[(1-Methyl)-Piperidin]-4-Yl-3-Propyl-3h-Imidazol-4-Yl]-Pyrimidin-2-Yl}Amine"/>
</dbReference>
<dbReference type="DrugBank" id="DB05660">
    <property type="generic name" value="D-JNKI-1"/>
</dbReference>
<dbReference type="DrugBank" id="DB11718">
    <property type="generic name" value="Encorafenib"/>
</dbReference>
<dbReference type="DrugBank" id="DB12010">
    <property type="generic name" value="Fostamatinib"/>
</dbReference>
<dbReference type="DrugBank" id="DB15624">
    <property type="generic name" value="Halicin"/>
</dbReference>
<dbReference type="DrugBank" id="DB01017">
    <property type="generic name" value="Minocycline"/>
</dbReference>
<dbReference type="DrugBank" id="DB07217">
    <property type="generic name" value="N-(3-cyano-4,5,6,7-tetrahydro-1-benzothien-2-yl)-2-fluorobenzamide"/>
</dbReference>
<dbReference type="DrugBank" id="DB06933">
    <property type="generic name" value="N-(tert-butyl)-4-[5-(pyridin-2-ylamino)quinolin-3-yl]benzenesulfonamide"/>
</dbReference>
<dbReference type="DrugBank" id="DB07010">
    <property type="generic name" value="N-BENZYL-4-[4-(3-CHLOROPHENYL)-1H-PYRAZOL-3-YL]-1H-PYRROLE-2-CARBOXAMIDE"/>
</dbReference>
<dbReference type="DrugBank" id="DB08023">
    <property type="generic name" value="N-cyclohexyl-4-imidazo[1,2-a]pyridin-3-yl-N-methylpyrimidin-2-amine"/>
</dbReference>
<dbReference type="DrugBank" id="DB08025">
    <property type="generic name" value="N-{2'-[(4-FLUOROPHENYL)AMINO]-4,4'-BIPYRIDIN-2-YL}-4-METHOXYCYCLOHEXANECARBOXAMIDE"/>
</dbReference>
<dbReference type="DrugBank" id="DB16995">
    <property type="generic name" value="NP-51"/>
</dbReference>
<dbReference type="DrugBank" id="DB04395">
    <property type="generic name" value="Phosphoaminophosphonic Acid-Adenylate Ester"/>
</dbReference>
<dbReference type="DrugBank" id="DB01782">
    <property type="generic name" value="Pyrazolanthrone"/>
</dbReference>
<dbReference type="DrugBank" id="DB11798">
    <property type="generic name" value="Tanzisertib"/>
</dbReference>
<dbReference type="DrugCentral" id="P53779"/>
<dbReference type="GuidetoPHARMACOLOGY" id="1498"/>
<dbReference type="iPTMnet" id="P53779"/>
<dbReference type="PhosphoSitePlus" id="P53779"/>
<dbReference type="SwissPalm" id="P53779"/>
<dbReference type="BioMuta" id="MAPK10"/>
<dbReference type="DMDM" id="2507196"/>
<dbReference type="CPTAC" id="CPTAC-2915"/>
<dbReference type="CPTAC" id="CPTAC-2916"/>
<dbReference type="jPOST" id="P53779"/>
<dbReference type="MassIVE" id="P53779"/>
<dbReference type="PaxDb" id="9606-ENSP00000352157"/>
<dbReference type="PeptideAtlas" id="P53779"/>
<dbReference type="ProteomicsDB" id="56616">
    <molecule id="P53779-1"/>
</dbReference>
<dbReference type="ProteomicsDB" id="56617">
    <molecule id="P53779-2"/>
</dbReference>
<dbReference type="ProteomicsDB" id="56618">
    <molecule id="P53779-3"/>
</dbReference>
<dbReference type="Pumba" id="P53779"/>
<dbReference type="Antibodypedia" id="14345">
    <property type="antibodies" value="591 antibodies from 39 providers"/>
</dbReference>
<dbReference type="DNASU" id="5602"/>
<dbReference type="Ensembl" id="ENST00000395157.9">
    <molecule id="P53779-2"/>
    <property type="protein sequence ID" value="ENSP00000378586.4"/>
    <property type="gene ID" value="ENSG00000109339.24"/>
</dbReference>
<dbReference type="Ensembl" id="ENST00000395166.6">
    <molecule id="P53779-3"/>
    <property type="protein sequence ID" value="ENSP00000378595.1"/>
    <property type="gene ID" value="ENSG00000109339.24"/>
</dbReference>
<dbReference type="Ensembl" id="ENST00000515400.3">
    <molecule id="P53779-1"/>
    <property type="protein sequence ID" value="ENSP00000424154.3"/>
    <property type="gene ID" value="ENSG00000109339.24"/>
</dbReference>
<dbReference type="Ensembl" id="ENST00000515650.2">
    <molecule id="P53779-1"/>
    <property type="protein sequence ID" value="ENSP00000492204.1"/>
    <property type="gene ID" value="ENSG00000109339.24"/>
</dbReference>
<dbReference type="Ensembl" id="ENST00000638225.1">
    <molecule id="P53779-3"/>
    <property type="protein sequence ID" value="ENSP00000491866.1"/>
    <property type="gene ID" value="ENSG00000109339.24"/>
</dbReference>
<dbReference type="Ensembl" id="ENST00000638313.1">
    <molecule id="P53779-1"/>
    <property type="protein sequence ID" value="ENSP00000492292.1"/>
    <property type="gene ID" value="ENSG00000109339.24"/>
</dbReference>
<dbReference type="Ensembl" id="ENST00000639175.1">
    <molecule id="P53779-3"/>
    <property type="protein sequence ID" value="ENSP00000491160.1"/>
    <property type="gene ID" value="ENSG00000109339.24"/>
</dbReference>
<dbReference type="Ensembl" id="ENST00000639234.1">
    <molecule id="P53779-2"/>
    <property type="protein sequence ID" value="ENSP00000491306.1"/>
    <property type="gene ID" value="ENSG00000109339.24"/>
</dbReference>
<dbReference type="Ensembl" id="ENST00000639242.1">
    <molecule id="P53779-3"/>
    <property type="protein sequence ID" value="ENSP00000491089.1"/>
    <property type="gene ID" value="ENSG00000109339.24"/>
</dbReference>
<dbReference type="Ensembl" id="ENST00000640858.1">
    <molecule id="P53779-2"/>
    <property type="protein sequence ID" value="ENSP00000491122.1"/>
    <property type="gene ID" value="ENSG00000109339.24"/>
</dbReference>
<dbReference type="Ensembl" id="ENST00000640970.1">
    <molecule id="P53779-2"/>
    <property type="protein sequence ID" value="ENSP00000492231.1"/>
    <property type="gene ID" value="ENSG00000109339.24"/>
</dbReference>
<dbReference type="Ensembl" id="ENST00000641050.1">
    <molecule id="P53779-2"/>
    <property type="protein sequence ID" value="ENSP00000493270.1"/>
    <property type="gene ID" value="ENSG00000109339.24"/>
</dbReference>
<dbReference type="Ensembl" id="ENST00000641051.1">
    <molecule id="P53779-1"/>
    <property type="protein sequence ID" value="ENSP00000493275.1"/>
    <property type="gene ID" value="ENSG00000109339.24"/>
</dbReference>
<dbReference type="Ensembl" id="ENST00000641066.1">
    <molecule id="P53779-1"/>
    <property type="protein sequence ID" value="ENSP00000493072.1"/>
    <property type="gene ID" value="ENSG00000109339.24"/>
</dbReference>
<dbReference type="Ensembl" id="ENST00000641110.1">
    <molecule id="P53779-3"/>
    <property type="protein sequence ID" value="ENSP00000493163.1"/>
    <property type="gene ID" value="ENSG00000109339.24"/>
</dbReference>
<dbReference type="Ensembl" id="ENST00000641157.1">
    <molecule id="P53779-1"/>
    <property type="protein sequence ID" value="ENSP00000493363.1"/>
    <property type="gene ID" value="ENSG00000109339.24"/>
</dbReference>
<dbReference type="Ensembl" id="ENST00000641170.1">
    <molecule id="P53779-2"/>
    <property type="protein sequence ID" value="ENSP00000493237.1"/>
    <property type="gene ID" value="ENSG00000109339.24"/>
</dbReference>
<dbReference type="Ensembl" id="ENST00000641207.1">
    <molecule id="P53779-1"/>
    <property type="protein sequence ID" value="ENSP00000493450.1"/>
    <property type="gene ID" value="ENSG00000109339.24"/>
</dbReference>
<dbReference type="Ensembl" id="ENST00000641274.1">
    <molecule id="P53779-2"/>
    <property type="protein sequence ID" value="ENSP00000492929.1"/>
    <property type="gene ID" value="ENSG00000109339.24"/>
</dbReference>
<dbReference type="Ensembl" id="ENST00000641283.1">
    <molecule id="P53779-3"/>
    <property type="protein sequence ID" value="ENSP00000493444.1"/>
    <property type="gene ID" value="ENSG00000109339.24"/>
</dbReference>
<dbReference type="Ensembl" id="ENST00000641287.1">
    <molecule id="P53779-3"/>
    <property type="protein sequence ID" value="ENSP00000493100.1"/>
    <property type="gene ID" value="ENSG00000109339.24"/>
</dbReference>
<dbReference type="Ensembl" id="ENST00000641297.1">
    <molecule id="P53779-3"/>
    <property type="protein sequence ID" value="ENSP00000493092.1"/>
    <property type="gene ID" value="ENSG00000109339.24"/>
</dbReference>
<dbReference type="Ensembl" id="ENST00000641341.1">
    <molecule id="P53779-1"/>
    <property type="protein sequence ID" value="ENSP00000493290.1"/>
    <property type="gene ID" value="ENSG00000109339.24"/>
</dbReference>
<dbReference type="Ensembl" id="ENST00000641391.1">
    <molecule id="P53779-3"/>
    <property type="protein sequence ID" value="ENSP00000493008.1"/>
    <property type="gene ID" value="ENSG00000109339.24"/>
</dbReference>
<dbReference type="Ensembl" id="ENST00000641410.1">
    <molecule id="P53779-2"/>
    <property type="protein sequence ID" value="ENSP00000493208.1"/>
    <property type="gene ID" value="ENSG00000109339.24"/>
</dbReference>
<dbReference type="Ensembl" id="ENST00000641462.2">
    <molecule id="P53779-1"/>
    <property type="protein sequence ID" value="ENSP00000493435.1"/>
    <property type="gene ID" value="ENSG00000109339.24"/>
</dbReference>
<dbReference type="Ensembl" id="ENST00000641647.1">
    <molecule id="P53779-1"/>
    <property type="protein sequence ID" value="ENSP00000493375.1"/>
    <property type="gene ID" value="ENSG00000109339.24"/>
</dbReference>
<dbReference type="Ensembl" id="ENST00000641657.1">
    <molecule id="P53779-3"/>
    <property type="protein sequence ID" value="ENSP00000493105.1"/>
    <property type="gene ID" value="ENSG00000109339.24"/>
</dbReference>
<dbReference type="Ensembl" id="ENST00000641724.1">
    <molecule id="P53779-3"/>
    <property type="protein sequence ID" value="ENSP00000493038.1"/>
    <property type="gene ID" value="ENSG00000109339.24"/>
</dbReference>
<dbReference type="Ensembl" id="ENST00000641737.1">
    <molecule id="P53779-3"/>
    <property type="protein sequence ID" value="ENSP00000493177.1"/>
    <property type="gene ID" value="ENSG00000109339.24"/>
</dbReference>
<dbReference type="Ensembl" id="ENST00000641803.1">
    <molecule id="P53779-3"/>
    <property type="protein sequence ID" value="ENSP00000493049.1"/>
    <property type="gene ID" value="ENSG00000109339.24"/>
</dbReference>
<dbReference type="Ensembl" id="ENST00000641823.1">
    <molecule id="P53779-1"/>
    <property type="protein sequence ID" value="ENSP00000493408.1"/>
    <property type="gene ID" value="ENSG00000109339.24"/>
</dbReference>
<dbReference type="Ensembl" id="ENST00000641862.1">
    <molecule id="P53779-2"/>
    <property type="protein sequence ID" value="ENSP00000493396.1"/>
    <property type="gene ID" value="ENSG00000109339.24"/>
</dbReference>
<dbReference type="Ensembl" id="ENST00000641902.1">
    <molecule id="P53779-1"/>
    <property type="protein sequence ID" value="ENSP00000492903.1"/>
    <property type="gene ID" value="ENSG00000109339.24"/>
</dbReference>
<dbReference type="Ensembl" id="ENST00000641911.1">
    <molecule id="P53779-3"/>
    <property type="protein sequence ID" value="ENSP00000493374.1"/>
    <property type="gene ID" value="ENSG00000109339.24"/>
</dbReference>
<dbReference type="Ensembl" id="ENST00000641943.1">
    <molecule id="P53779-3"/>
    <property type="protein sequence ID" value="ENSP00000492941.1"/>
    <property type="gene ID" value="ENSG00000109339.24"/>
</dbReference>
<dbReference type="Ensembl" id="ENST00000641952.1">
    <molecule id="P53779-1"/>
    <property type="protein sequence ID" value="ENSP00000493013.1"/>
    <property type="gene ID" value="ENSG00000109339.24"/>
</dbReference>
<dbReference type="Ensembl" id="ENST00000641983.1">
    <molecule id="P53779-1"/>
    <property type="protein sequence ID" value="ENSP00000493045.1"/>
    <property type="gene ID" value="ENSG00000109339.24"/>
</dbReference>
<dbReference type="Ensembl" id="ENST00000642009.1">
    <molecule id="P53779-3"/>
    <property type="protein sequence ID" value="ENSP00000493168.1"/>
    <property type="gene ID" value="ENSG00000109339.24"/>
</dbReference>
<dbReference type="Ensembl" id="ENST00000642015.1">
    <molecule id="P53779-3"/>
    <property type="protein sequence ID" value="ENSP00000493040.1"/>
    <property type="gene ID" value="ENSG00000109339.24"/>
</dbReference>
<dbReference type="Ensembl" id="ENST00000642038.1">
    <molecule id="P53779-2"/>
    <property type="protein sequence ID" value="ENSP00000492942.1"/>
    <property type="gene ID" value="ENSG00000109339.24"/>
</dbReference>
<dbReference type="Ensembl" id="ENST00000642103.1">
    <molecule id="P53779-3"/>
    <property type="protein sequence ID" value="ENSP00000493001.1"/>
    <property type="gene ID" value="ENSG00000109339.24"/>
</dbReference>
<dbReference type="GeneID" id="5602"/>
<dbReference type="KEGG" id="hsa:5602"/>
<dbReference type="MANE-Select" id="ENST00000641462.2">
    <property type="protein sequence ID" value="ENSP00000493435.1"/>
    <property type="RefSeq nucleotide sequence ID" value="NM_138982.4"/>
    <property type="RefSeq protein sequence ID" value="NP_620448.1"/>
</dbReference>
<dbReference type="UCSC" id="uc003hpp.4">
    <molecule id="P53779-1"/>
    <property type="organism name" value="human"/>
</dbReference>
<dbReference type="AGR" id="HGNC:6872"/>
<dbReference type="CTD" id="5602"/>
<dbReference type="DisGeNET" id="5602"/>
<dbReference type="GeneCards" id="MAPK10"/>
<dbReference type="HGNC" id="HGNC:6872">
    <property type="gene designation" value="MAPK10"/>
</dbReference>
<dbReference type="HPA" id="ENSG00000109339">
    <property type="expression patterns" value="Tissue enhanced (brain)"/>
</dbReference>
<dbReference type="MalaCards" id="MAPK10"/>
<dbReference type="MIM" id="602897">
    <property type="type" value="gene"/>
</dbReference>
<dbReference type="neXtProt" id="NX_P53779"/>
<dbReference type="OpenTargets" id="ENSG00000109339"/>
<dbReference type="Orphanet" id="2382">
    <property type="disease" value="Lennox-Gastaut syndrome"/>
</dbReference>
<dbReference type="PharmGKB" id="PA30617"/>
<dbReference type="VEuPathDB" id="HostDB:ENSG00000109339"/>
<dbReference type="eggNOG" id="KOG0665">
    <property type="taxonomic scope" value="Eukaryota"/>
</dbReference>
<dbReference type="GeneTree" id="ENSGT00940000153692"/>
<dbReference type="HOGENOM" id="CLU_000288_181_1_1"/>
<dbReference type="InParanoid" id="P53779"/>
<dbReference type="OrthoDB" id="192887at2759"/>
<dbReference type="PAN-GO" id="P53779">
    <property type="GO annotations" value="4 GO annotations based on evolutionary models"/>
</dbReference>
<dbReference type="PhylomeDB" id="P53779"/>
<dbReference type="TreeFam" id="TF105100"/>
<dbReference type="BRENDA" id="2.7.11.24">
    <property type="organism ID" value="2681"/>
</dbReference>
<dbReference type="PathwayCommons" id="P53779"/>
<dbReference type="Reactome" id="R-HSA-2559580">
    <property type="pathway name" value="Oxidative Stress Induced Senescence"/>
</dbReference>
<dbReference type="Reactome" id="R-HSA-2871796">
    <property type="pathway name" value="FCERI mediated MAPK activation"/>
</dbReference>
<dbReference type="Reactome" id="R-HSA-450321">
    <property type="pathway name" value="JNK (c-Jun kinases) phosphorylation and activation mediated by activated human TAK1"/>
</dbReference>
<dbReference type="Reactome" id="R-HSA-450341">
    <property type="pathway name" value="Activation of the AP-1 family of transcription factors"/>
</dbReference>
<dbReference type="SignaLink" id="P53779"/>
<dbReference type="SIGNOR" id="P53779"/>
<dbReference type="BioGRID-ORCS" id="5602">
    <property type="hits" value="12 hits in 1186 CRISPR screens"/>
</dbReference>
<dbReference type="CD-CODE" id="8C2F96ED">
    <property type="entry name" value="Centrosome"/>
</dbReference>
<dbReference type="ChiTaRS" id="MAPK10">
    <property type="organism name" value="human"/>
</dbReference>
<dbReference type="EvolutionaryTrace" id="P53779"/>
<dbReference type="GeneWiki" id="MAPK10"/>
<dbReference type="GenomeRNAi" id="5602"/>
<dbReference type="Pharos" id="P53779">
    <property type="development level" value="Tchem"/>
</dbReference>
<dbReference type="PRO" id="PR:P53779"/>
<dbReference type="Proteomes" id="UP000005640">
    <property type="component" value="Chromosome 4"/>
</dbReference>
<dbReference type="RNAct" id="P53779">
    <property type="molecule type" value="protein"/>
</dbReference>
<dbReference type="Bgee" id="ENSG00000109339">
    <property type="expression patterns" value="Expressed in adrenal tissue and 134 other cell types or tissues"/>
</dbReference>
<dbReference type="ExpressionAtlas" id="P53779">
    <property type="expression patterns" value="baseline and differential"/>
</dbReference>
<dbReference type="GO" id="GO:0005737">
    <property type="term" value="C:cytoplasm"/>
    <property type="evidence" value="ECO:0000250"/>
    <property type="project" value="UniProtKB"/>
</dbReference>
<dbReference type="GO" id="GO:0005829">
    <property type="term" value="C:cytosol"/>
    <property type="evidence" value="ECO:0000304"/>
    <property type="project" value="Reactome"/>
</dbReference>
<dbReference type="GO" id="GO:0005739">
    <property type="term" value="C:mitochondrion"/>
    <property type="evidence" value="ECO:0000250"/>
    <property type="project" value="UniProtKB"/>
</dbReference>
<dbReference type="GO" id="GO:0005654">
    <property type="term" value="C:nucleoplasm"/>
    <property type="evidence" value="ECO:0000314"/>
    <property type="project" value="HPA"/>
</dbReference>
<dbReference type="GO" id="GO:0005634">
    <property type="term" value="C:nucleus"/>
    <property type="evidence" value="ECO:0000318"/>
    <property type="project" value="GO_Central"/>
</dbReference>
<dbReference type="GO" id="GO:0005886">
    <property type="term" value="C:plasma membrane"/>
    <property type="evidence" value="ECO:0000250"/>
    <property type="project" value="UniProtKB"/>
</dbReference>
<dbReference type="GO" id="GO:0005524">
    <property type="term" value="F:ATP binding"/>
    <property type="evidence" value="ECO:0007669"/>
    <property type="project" value="UniProtKB-KW"/>
</dbReference>
<dbReference type="GO" id="GO:0004705">
    <property type="term" value="F:JUN kinase activity"/>
    <property type="evidence" value="ECO:0000250"/>
    <property type="project" value="UniProtKB"/>
</dbReference>
<dbReference type="GO" id="GO:0004708">
    <property type="term" value="F:MAP kinase kinase activity"/>
    <property type="evidence" value="ECO:0000304"/>
    <property type="project" value="ProtInc"/>
</dbReference>
<dbReference type="GO" id="GO:0106310">
    <property type="term" value="F:protein serine kinase activity"/>
    <property type="evidence" value="ECO:0007669"/>
    <property type="project" value="RHEA"/>
</dbReference>
<dbReference type="GO" id="GO:0090398">
    <property type="term" value="P:cellular senescence"/>
    <property type="evidence" value="ECO:0000304"/>
    <property type="project" value="Reactome"/>
</dbReference>
<dbReference type="GO" id="GO:0038095">
    <property type="term" value="P:Fc-epsilon receptor signaling pathway"/>
    <property type="evidence" value="ECO:0000304"/>
    <property type="project" value="Reactome"/>
</dbReference>
<dbReference type="GO" id="GO:0007254">
    <property type="term" value="P:JNK cascade"/>
    <property type="evidence" value="ECO:0000250"/>
    <property type="project" value="UniProtKB"/>
</dbReference>
<dbReference type="GO" id="GO:0006468">
    <property type="term" value="P:protein phosphorylation"/>
    <property type="evidence" value="ECO:0000315"/>
    <property type="project" value="UniProtKB"/>
</dbReference>
<dbReference type="GO" id="GO:0042752">
    <property type="term" value="P:regulation of circadian rhythm"/>
    <property type="evidence" value="ECO:0000250"/>
    <property type="project" value="UniProtKB"/>
</dbReference>
<dbReference type="GO" id="GO:0009416">
    <property type="term" value="P:response to light stimulus"/>
    <property type="evidence" value="ECO:0000250"/>
    <property type="project" value="UniProtKB"/>
</dbReference>
<dbReference type="GO" id="GO:0048511">
    <property type="term" value="P:rhythmic process"/>
    <property type="evidence" value="ECO:0007669"/>
    <property type="project" value="UniProtKB-KW"/>
</dbReference>
<dbReference type="GO" id="GO:0007165">
    <property type="term" value="P:signal transduction"/>
    <property type="evidence" value="ECO:0000304"/>
    <property type="project" value="ProtInc"/>
</dbReference>
<dbReference type="CDD" id="cd07850">
    <property type="entry name" value="STKc_JNK"/>
    <property type="match status" value="1"/>
</dbReference>
<dbReference type="DisProt" id="DP02328"/>
<dbReference type="FunFam" id="1.10.510.10:FF:000009">
    <property type="entry name" value="Mitogen-activated protein kinase"/>
    <property type="match status" value="1"/>
</dbReference>
<dbReference type="FunFam" id="3.30.200.20:FF:000210">
    <property type="entry name" value="Mitogen-activated protein kinase"/>
    <property type="match status" value="1"/>
</dbReference>
<dbReference type="Gene3D" id="3.30.200.20">
    <property type="entry name" value="Phosphorylase Kinase, domain 1"/>
    <property type="match status" value="1"/>
</dbReference>
<dbReference type="Gene3D" id="1.10.510.10">
    <property type="entry name" value="Transferase(Phosphotransferase) domain 1"/>
    <property type="match status" value="1"/>
</dbReference>
<dbReference type="IDEAL" id="IID00456"/>
<dbReference type="InterPro" id="IPR011009">
    <property type="entry name" value="Kinase-like_dom_sf"/>
</dbReference>
<dbReference type="InterPro" id="IPR050117">
    <property type="entry name" value="MAP_kinase"/>
</dbReference>
<dbReference type="InterPro" id="IPR003527">
    <property type="entry name" value="MAP_kinase_CS"/>
</dbReference>
<dbReference type="InterPro" id="IPR008351">
    <property type="entry name" value="MAPK_JNK"/>
</dbReference>
<dbReference type="InterPro" id="IPR000719">
    <property type="entry name" value="Prot_kinase_dom"/>
</dbReference>
<dbReference type="InterPro" id="IPR008271">
    <property type="entry name" value="Ser/Thr_kinase_AS"/>
</dbReference>
<dbReference type="PANTHER" id="PTHR24055">
    <property type="entry name" value="MITOGEN-ACTIVATED PROTEIN KINASE"/>
    <property type="match status" value="1"/>
</dbReference>
<dbReference type="Pfam" id="PF00069">
    <property type="entry name" value="Pkinase"/>
    <property type="match status" value="1"/>
</dbReference>
<dbReference type="PRINTS" id="PR01772">
    <property type="entry name" value="JNKMAPKINASE"/>
</dbReference>
<dbReference type="SMART" id="SM00220">
    <property type="entry name" value="S_TKc"/>
    <property type="match status" value="1"/>
</dbReference>
<dbReference type="SUPFAM" id="SSF56112">
    <property type="entry name" value="Protein kinase-like (PK-like)"/>
    <property type="match status" value="1"/>
</dbReference>
<dbReference type="PROSITE" id="PS01351">
    <property type="entry name" value="MAPK"/>
    <property type="match status" value="1"/>
</dbReference>
<dbReference type="PROSITE" id="PS50011">
    <property type="entry name" value="PROTEIN_KINASE_DOM"/>
    <property type="match status" value="1"/>
</dbReference>
<dbReference type="PROSITE" id="PS00108">
    <property type="entry name" value="PROTEIN_KINASE_ST"/>
    <property type="match status" value="1"/>
</dbReference>
<accession>P53779</accession>
<accession>A6NFS3</accession>
<accession>A6NG28</accession>
<accession>B3KQ94</accession>
<accession>Q15707</accession>
<accession>Q49AP1</accession>
<gene>
    <name type="primary">MAPK10</name>
    <name type="synonym">JNK3</name>
    <name type="synonym">JNK3A</name>
    <name type="synonym">PRKM10</name>
    <name type="synonym">SAPK1B</name>
</gene>
<organism>
    <name type="scientific">Homo sapiens</name>
    <name type="common">Human</name>
    <dbReference type="NCBI Taxonomy" id="9606"/>
    <lineage>
        <taxon>Eukaryota</taxon>
        <taxon>Metazoa</taxon>
        <taxon>Chordata</taxon>
        <taxon>Craniata</taxon>
        <taxon>Vertebrata</taxon>
        <taxon>Euteleostomi</taxon>
        <taxon>Mammalia</taxon>
        <taxon>Eutheria</taxon>
        <taxon>Euarchontoglires</taxon>
        <taxon>Primates</taxon>
        <taxon>Haplorrhini</taxon>
        <taxon>Catarrhini</taxon>
        <taxon>Hominidae</taxon>
        <taxon>Homo</taxon>
    </lineage>
</organism>
<proteinExistence type="evidence at protein level"/>